<reference key="1">
    <citation type="journal article" date="2004" name="Science">
        <title>The 1.2-megabase genome sequence of Mimivirus.</title>
        <authorList>
            <person name="Raoult D."/>
            <person name="Audic S."/>
            <person name="Robert C."/>
            <person name="Abergel C."/>
            <person name="Renesto P."/>
            <person name="Ogata H."/>
            <person name="La Scola B."/>
            <person name="Susan M."/>
            <person name="Claverie J.-M."/>
        </authorList>
    </citation>
    <scope>NUCLEOTIDE SEQUENCE [LARGE SCALE GENOMIC DNA]</scope>
    <source>
        <strain>Rowbotham-Bradford</strain>
    </source>
</reference>
<organism>
    <name type="scientific">Acanthamoeba polyphaga mimivirus</name>
    <name type="common">APMV</name>
    <dbReference type="NCBI Taxonomy" id="212035"/>
    <lineage>
        <taxon>Viruses</taxon>
        <taxon>Varidnaviria</taxon>
        <taxon>Bamfordvirae</taxon>
        <taxon>Nucleocytoviricota</taxon>
        <taxon>Megaviricetes</taxon>
        <taxon>Imitervirales</taxon>
        <taxon>Mimiviridae</taxon>
        <taxon>Megamimivirinae</taxon>
        <taxon>Mimivirus</taxon>
        <taxon>Mimivirus bradfordmassiliense</taxon>
    </lineage>
</organism>
<organismHost>
    <name type="scientific">Acanthamoeba polyphaga</name>
    <name type="common">Amoeba</name>
    <dbReference type="NCBI Taxonomy" id="5757"/>
</organismHost>
<name>YL005_MIMIV</name>
<comment type="similarity">
    <text evidence="3">Belongs to the mimivirus L5 family.</text>
</comment>
<gene>
    <name type="ordered locus">MIMI_L5</name>
</gene>
<protein>
    <recommendedName>
        <fullName>Uncharacterized protein L5</fullName>
    </recommendedName>
</protein>
<proteinExistence type="inferred from homology"/>
<accession>Q5UP82</accession>
<evidence type="ECO:0000255" key="1"/>
<evidence type="ECO:0000256" key="2">
    <source>
        <dbReference type="SAM" id="MobiDB-lite"/>
    </source>
</evidence>
<evidence type="ECO:0000305" key="3"/>
<feature type="chain" id="PRO_0000071173" description="Uncharacterized protein L5">
    <location>
        <begin position="1"/>
        <end position="461"/>
    </location>
</feature>
<feature type="region of interest" description="Disordered" evidence="2">
    <location>
        <begin position="86"/>
        <end position="127"/>
    </location>
</feature>
<feature type="coiled-coil region" evidence="1">
    <location>
        <begin position="95"/>
        <end position="123"/>
    </location>
</feature>
<feature type="coiled-coil region" evidence="1">
    <location>
        <begin position="405"/>
        <end position="459"/>
    </location>
</feature>
<feature type="compositionally biased region" description="Acidic residues" evidence="2">
    <location>
        <begin position="92"/>
        <end position="122"/>
    </location>
</feature>
<sequence>MNKLKKIQMKETDYYFGNDIAQLNLPGLKKYTNGRRLVEDQGISNKHYMFVRHDGDSWIKSSDKSCKFDKIIIKADYVEKHIFPKKMKPNKDDDEEEDEDDEDDEDDEEEDNEEEDNEEENEITIAPGIIKLSKKEKMKDNSGNIIEIEVRGTRDHDNCYFRVSDVSVGFGMKKLHDTITKKGGYEENNHYRYFYIDKNPTNSGKSKKVKSKKPLPKKLFLTYLGLLKVLFVSRNKTVGNFLNWATETLFTAHLGTQDQKNELSSKLMGISANIVKEVFSTTSSTLPTIYLFSIGKVKDLRATLKIDKEYNDNDIVCKVGETIDLTRRINEHNATYGKLPGANLCLKWYNYIDPQHTSKAETELLMLLDKLGHKLDHPKYDELIIFPKDKKAGKFIIDQFKNVSNKYIGHVKVLVDKIKELENEIKELKYQNEINELKYKNIILEKDLEISNLNKKLKKKK</sequence>
<keyword id="KW-0175">Coiled coil</keyword>
<keyword id="KW-1185">Reference proteome</keyword>
<dbReference type="EMBL" id="AY653733">
    <property type="protein sequence ID" value="AAV50280.1"/>
    <property type="molecule type" value="Genomic_DNA"/>
</dbReference>
<dbReference type="SMR" id="Q5UP82"/>
<dbReference type="KEGG" id="vg:9924574"/>
<dbReference type="OrthoDB" id="29666at10239"/>
<dbReference type="Proteomes" id="UP000001134">
    <property type="component" value="Genome"/>
</dbReference>